<protein>
    <recommendedName>
        <fullName evidence="1">Small ribosomal subunit protein bS16</fullName>
    </recommendedName>
    <alternativeName>
        <fullName evidence="3">30S ribosomal protein S16</fullName>
    </alternativeName>
</protein>
<reference key="1">
    <citation type="journal article" date="2010" name="J. Bacteriol.">
        <title>Complete genome sequence of the aerobic facultative methanotroph Methylocella silvestris BL2.</title>
        <authorList>
            <person name="Chen Y."/>
            <person name="Crombie A."/>
            <person name="Rahman M.T."/>
            <person name="Dedysh S.N."/>
            <person name="Liesack W."/>
            <person name="Stott M.B."/>
            <person name="Alam M."/>
            <person name="Theisen A.R."/>
            <person name="Murrell J.C."/>
            <person name="Dunfield P.F."/>
        </authorList>
    </citation>
    <scope>NUCLEOTIDE SEQUENCE [LARGE SCALE GENOMIC DNA]</scope>
    <source>
        <strain>DSM 15510 / CIP 108128 / LMG 27833 / NCIMB 13906 / BL2</strain>
    </source>
</reference>
<dbReference type="EMBL" id="CP001280">
    <property type="protein sequence ID" value="ACK51893.1"/>
    <property type="molecule type" value="Genomic_DNA"/>
</dbReference>
<dbReference type="RefSeq" id="WP_012591962.1">
    <property type="nucleotide sequence ID" value="NC_011666.1"/>
</dbReference>
<dbReference type="SMR" id="B8EIS6"/>
<dbReference type="STRING" id="395965.Msil_2982"/>
<dbReference type="KEGG" id="msl:Msil_2982"/>
<dbReference type="eggNOG" id="COG0228">
    <property type="taxonomic scope" value="Bacteria"/>
</dbReference>
<dbReference type="HOGENOM" id="CLU_100590_3_1_5"/>
<dbReference type="OrthoDB" id="9807878at2"/>
<dbReference type="Proteomes" id="UP000002257">
    <property type="component" value="Chromosome"/>
</dbReference>
<dbReference type="GO" id="GO:0005737">
    <property type="term" value="C:cytoplasm"/>
    <property type="evidence" value="ECO:0007669"/>
    <property type="project" value="UniProtKB-ARBA"/>
</dbReference>
<dbReference type="GO" id="GO:0015935">
    <property type="term" value="C:small ribosomal subunit"/>
    <property type="evidence" value="ECO:0007669"/>
    <property type="project" value="TreeGrafter"/>
</dbReference>
<dbReference type="GO" id="GO:0003735">
    <property type="term" value="F:structural constituent of ribosome"/>
    <property type="evidence" value="ECO:0007669"/>
    <property type="project" value="InterPro"/>
</dbReference>
<dbReference type="GO" id="GO:0006412">
    <property type="term" value="P:translation"/>
    <property type="evidence" value="ECO:0007669"/>
    <property type="project" value="UniProtKB-UniRule"/>
</dbReference>
<dbReference type="Gene3D" id="3.30.1320.10">
    <property type="match status" value="1"/>
</dbReference>
<dbReference type="HAMAP" id="MF_00385">
    <property type="entry name" value="Ribosomal_bS16"/>
    <property type="match status" value="1"/>
</dbReference>
<dbReference type="InterPro" id="IPR000307">
    <property type="entry name" value="Ribosomal_bS16"/>
</dbReference>
<dbReference type="InterPro" id="IPR020592">
    <property type="entry name" value="Ribosomal_bS16_CS"/>
</dbReference>
<dbReference type="InterPro" id="IPR023803">
    <property type="entry name" value="Ribosomal_bS16_dom_sf"/>
</dbReference>
<dbReference type="NCBIfam" id="TIGR00002">
    <property type="entry name" value="S16"/>
    <property type="match status" value="1"/>
</dbReference>
<dbReference type="PANTHER" id="PTHR12919">
    <property type="entry name" value="30S RIBOSOMAL PROTEIN S16"/>
    <property type="match status" value="1"/>
</dbReference>
<dbReference type="PANTHER" id="PTHR12919:SF20">
    <property type="entry name" value="SMALL RIBOSOMAL SUBUNIT PROTEIN BS16M"/>
    <property type="match status" value="1"/>
</dbReference>
<dbReference type="Pfam" id="PF00886">
    <property type="entry name" value="Ribosomal_S16"/>
    <property type="match status" value="1"/>
</dbReference>
<dbReference type="SUPFAM" id="SSF54565">
    <property type="entry name" value="Ribosomal protein S16"/>
    <property type="match status" value="1"/>
</dbReference>
<dbReference type="PROSITE" id="PS00732">
    <property type="entry name" value="RIBOSOMAL_S16"/>
    <property type="match status" value="1"/>
</dbReference>
<name>RS16_METSB</name>
<sequence length="122" mass="13159">MPLKIRLSRGGAKKRPFYRVVVADSRMPRDGRFIERLGVFDPLKAKDSAERVVLDAEKAKEWIAKGAQPTDRVARLLDGLGVLTREAQSNPKKALPKKKAQERAAASAAAAEKAAAAAAPEA</sequence>
<feature type="chain" id="PRO_1000196437" description="Small ribosomal subunit protein bS16">
    <location>
        <begin position="1"/>
        <end position="122"/>
    </location>
</feature>
<feature type="region of interest" description="Disordered" evidence="2">
    <location>
        <begin position="87"/>
        <end position="122"/>
    </location>
</feature>
<feature type="compositionally biased region" description="Low complexity" evidence="2">
    <location>
        <begin position="103"/>
        <end position="122"/>
    </location>
</feature>
<accession>B8EIS6</accession>
<evidence type="ECO:0000255" key="1">
    <source>
        <dbReference type="HAMAP-Rule" id="MF_00385"/>
    </source>
</evidence>
<evidence type="ECO:0000256" key="2">
    <source>
        <dbReference type="SAM" id="MobiDB-lite"/>
    </source>
</evidence>
<evidence type="ECO:0000305" key="3"/>
<proteinExistence type="inferred from homology"/>
<keyword id="KW-1185">Reference proteome</keyword>
<keyword id="KW-0687">Ribonucleoprotein</keyword>
<keyword id="KW-0689">Ribosomal protein</keyword>
<gene>
    <name evidence="1" type="primary">rpsP</name>
    <name type="ordered locus">Msil_2982</name>
</gene>
<comment type="similarity">
    <text evidence="1">Belongs to the bacterial ribosomal protein bS16 family.</text>
</comment>
<organism>
    <name type="scientific">Methylocella silvestris (strain DSM 15510 / CIP 108128 / LMG 27833 / NCIMB 13906 / BL2)</name>
    <dbReference type="NCBI Taxonomy" id="395965"/>
    <lineage>
        <taxon>Bacteria</taxon>
        <taxon>Pseudomonadati</taxon>
        <taxon>Pseudomonadota</taxon>
        <taxon>Alphaproteobacteria</taxon>
        <taxon>Hyphomicrobiales</taxon>
        <taxon>Beijerinckiaceae</taxon>
        <taxon>Methylocella</taxon>
    </lineage>
</organism>